<name>SYL_CHLT2</name>
<dbReference type="EC" id="6.1.1.4" evidence="1"/>
<dbReference type="EMBL" id="AM884176">
    <property type="protein sequence ID" value="CAP03900.1"/>
    <property type="molecule type" value="Genomic_DNA"/>
</dbReference>
<dbReference type="RefSeq" id="WP_009873640.1">
    <property type="nucleotide sequence ID" value="NC_010287.1"/>
</dbReference>
<dbReference type="RefSeq" id="YP_001654537.1">
    <property type="nucleotide sequence ID" value="NC_010287.1"/>
</dbReference>
<dbReference type="SMR" id="B0B9V9"/>
<dbReference type="KEGG" id="ctb:CTL0461"/>
<dbReference type="PATRIC" id="fig|471472.4.peg.496"/>
<dbReference type="HOGENOM" id="CLU_004427_0_0_0"/>
<dbReference type="Proteomes" id="UP001154402">
    <property type="component" value="Chromosome"/>
</dbReference>
<dbReference type="GO" id="GO:0005829">
    <property type="term" value="C:cytosol"/>
    <property type="evidence" value="ECO:0007669"/>
    <property type="project" value="TreeGrafter"/>
</dbReference>
<dbReference type="GO" id="GO:0002161">
    <property type="term" value="F:aminoacyl-tRNA deacylase activity"/>
    <property type="evidence" value="ECO:0007669"/>
    <property type="project" value="InterPro"/>
</dbReference>
<dbReference type="GO" id="GO:0005524">
    <property type="term" value="F:ATP binding"/>
    <property type="evidence" value="ECO:0007669"/>
    <property type="project" value="UniProtKB-UniRule"/>
</dbReference>
<dbReference type="GO" id="GO:0004823">
    <property type="term" value="F:leucine-tRNA ligase activity"/>
    <property type="evidence" value="ECO:0007669"/>
    <property type="project" value="UniProtKB-UniRule"/>
</dbReference>
<dbReference type="GO" id="GO:0006429">
    <property type="term" value="P:leucyl-tRNA aminoacylation"/>
    <property type="evidence" value="ECO:0007669"/>
    <property type="project" value="UniProtKB-UniRule"/>
</dbReference>
<dbReference type="CDD" id="cd07958">
    <property type="entry name" value="Anticodon_Ia_Leu_BEm"/>
    <property type="match status" value="1"/>
</dbReference>
<dbReference type="CDD" id="cd00812">
    <property type="entry name" value="LeuRS_core"/>
    <property type="match status" value="1"/>
</dbReference>
<dbReference type="FunFam" id="1.10.730.10:FF:000002">
    <property type="entry name" value="Leucine--tRNA ligase"/>
    <property type="match status" value="1"/>
</dbReference>
<dbReference type="FunFam" id="1.10.730.10:FF:000086">
    <property type="entry name" value="Leucine--tRNA ligase"/>
    <property type="match status" value="1"/>
</dbReference>
<dbReference type="FunFam" id="3.40.50.620:FF:000056">
    <property type="entry name" value="Leucine--tRNA ligase"/>
    <property type="match status" value="1"/>
</dbReference>
<dbReference type="FunFam" id="3.40.50.620:FF:000077">
    <property type="entry name" value="Leucine--tRNA ligase"/>
    <property type="match status" value="1"/>
</dbReference>
<dbReference type="Gene3D" id="3.40.50.620">
    <property type="entry name" value="HUPs"/>
    <property type="match status" value="2"/>
</dbReference>
<dbReference type="Gene3D" id="1.10.730.10">
    <property type="entry name" value="Isoleucyl-tRNA Synthetase, Domain 1"/>
    <property type="match status" value="1"/>
</dbReference>
<dbReference type="HAMAP" id="MF_00049_B">
    <property type="entry name" value="Leu_tRNA_synth_B"/>
    <property type="match status" value="1"/>
</dbReference>
<dbReference type="InterPro" id="IPR001412">
    <property type="entry name" value="aa-tRNA-synth_I_CS"/>
</dbReference>
<dbReference type="InterPro" id="IPR002302">
    <property type="entry name" value="Leu-tRNA-ligase"/>
</dbReference>
<dbReference type="InterPro" id="IPR025709">
    <property type="entry name" value="Leu_tRNA-synth_edit"/>
</dbReference>
<dbReference type="InterPro" id="IPR013155">
    <property type="entry name" value="M/V/L/I-tRNA-synth_anticd-bd"/>
</dbReference>
<dbReference type="InterPro" id="IPR015413">
    <property type="entry name" value="Methionyl/Leucyl_tRNA_Synth"/>
</dbReference>
<dbReference type="InterPro" id="IPR014729">
    <property type="entry name" value="Rossmann-like_a/b/a_fold"/>
</dbReference>
<dbReference type="InterPro" id="IPR009080">
    <property type="entry name" value="tRNAsynth_Ia_anticodon-bd"/>
</dbReference>
<dbReference type="InterPro" id="IPR009008">
    <property type="entry name" value="Val/Leu/Ile-tRNA-synth_edit"/>
</dbReference>
<dbReference type="NCBIfam" id="TIGR00396">
    <property type="entry name" value="leuS_bact"/>
    <property type="match status" value="1"/>
</dbReference>
<dbReference type="PANTHER" id="PTHR43740:SF2">
    <property type="entry name" value="LEUCINE--TRNA LIGASE, MITOCHONDRIAL"/>
    <property type="match status" value="1"/>
</dbReference>
<dbReference type="PANTHER" id="PTHR43740">
    <property type="entry name" value="LEUCYL-TRNA SYNTHETASE"/>
    <property type="match status" value="1"/>
</dbReference>
<dbReference type="Pfam" id="PF08264">
    <property type="entry name" value="Anticodon_1"/>
    <property type="match status" value="1"/>
</dbReference>
<dbReference type="Pfam" id="PF13603">
    <property type="entry name" value="tRNA-synt_1_2"/>
    <property type="match status" value="1"/>
</dbReference>
<dbReference type="Pfam" id="PF09334">
    <property type="entry name" value="tRNA-synt_1g"/>
    <property type="match status" value="1"/>
</dbReference>
<dbReference type="PRINTS" id="PR00985">
    <property type="entry name" value="TRNASYNTHLEU"/>
</dbReference>
<dbReference type="SUPFAM" id="SSF47323">
    <property type="entry name" value="Anticodon-binding domain of a subclass of class I aminoacyl-tRNA synthetases"/>
    <property type="match status" value="1"/>
</dbReference>
<dbReference type="SUPFAM" id="SSF52374">
    <property type="entry name" value="Nucleotidylyl transferase"/>
    <property type="match status" value="1"/>
</dbReference>
<dbReference type="SUPFAM" id="SSF50677">
    <property type="entry name" value="ValRS/IleRS/LeuRS editing domain"/>
    <property type="match status" value="1"/>
</dbReference>
<dbReference type="PROSITE" id="PS00178">
    <property type="entry name" value="AA_TRNA_LIGASE_I"/>
    <property type="match status" value="1"/>
</dbReference>
<organism>
    <name type="scientific">Chlamydia trachomatis serovar L2 (strain ATCC VR-902B / DSM 19102 / 434/Bu)</name>
    <dbReference type="NCBI Taxonomy" id="471472"/>
    <lineage>
        <taxon>Bacteria</taxon>
        <taxon>Pseudomonadati</taxon>
        <taxon>Chlamydiota</taxon>
        <taxon>Chlamydiia</taxon>
        <taxon>Chlamydiales</taxon>
        <taxon>Chlamydiaceae</taxon>
        <taxon>Chlamydia/Chlamydophila group</taxon>
        <taxon>Chlamydia</taxon>
    </lineage>
</organism>
<gene>
    <name evidence="1" type="primary">leuS</name>
    <name type="ordered locus">CTL0461</name>
</gene>
<accession>B0B9V9</accession>
<sequence>MRYDPGLIEEKWQKFWKNEQVFKAEEDETKTKYYVLDMFPYPSGAGLHVGHLIGYTATDIVARCKRAQGFSVLHPMGWDSFGLPAEQYAIRTGTHPRETTEKNIANFKKQLTAMGFSYDESREFATSDPEYYKWTQKLFLILYEKGLAYMADMAVNYCPELGTVLSNEEIENGFSVDGGYPVERRMLRQWVLRITAFADQLLEGLDELDWPESVKQLQKNWIGKSSGASVNFATEHGAIEVFTTRPDTLIGVSFLALAPEHPLVDLLTSDEQKAVVAQYIKETQSKSERDRISEMKTKSGVFTGSYAKHPVTHELIPIWIADYVLMGFGSGAVMGVPAHDERDLLFAEQFNLPVVSVLNEEGVCINSCCEGFHLDGLSGEEAKQYVINFLEENHLGAAKIAYKLRDWLFSRQRYWGEPIPIIHFEDGSCRPLRDDELPLLPPEIQDYRPEGVGQGPLAKVREWVQVFDTETQRAGKRETHTMPQWAGSCWYYLRFCDAHNSAAPWAKEKEQYWMPVDLYIGGAEHAVLHLLYARFWHQVFYEAGIVSTPEPFKKLVNQGLVLATSYRIPGKGYIYPETAKEENGKWVAPSGEELDVRQEKMSKSKLNGVDPQILIDEFGADAVRMYAMFSGPLDKNKLWSNQGVAGCRRFLNRFYEMVSSDRVKEDNNFEGLSLAHKLVQRVTDAIEKLSLNTIPSSFMEFINDFVKLAVYPKSAVEMAVRALAPIAPHISEELWVLLGNSPGVQKSGWPSVLPEYLEEQTVTIVVQVNGKLRARLDIMKDASKEEVLALARESASKYLEGCEVKKAIFVPARLVNFVV</sequence>
<evidence type="ECO:0000255" key="1">
    <source>
        <dbReference type="HAMAP-Rule" id="MF_00049"/>
    </source>
</evidence>
<protein>
    <recommendedName>
        <fullName evidence="1">Leucine--tRNA ligase</fullName>
        <ecNumber evidence="1">6.1.1.4</ecNumber>
    </recommendedName>
    <alternativeName>
        <fullName evidence="1">Leucyl-tRNA synthetase</fullName>
        <shortName evidence="1">LeuRS</shortName>
    </alternativeName>
</protein>
<reference key="1">
    <citation type="journal article" date="2008" name="Genome Res.">
        <title>Chlamydia trachomatis: genome sequence analysis of lymphogranuloma venereum isolates.</title>
        <authorList>
            <person name="Thomson N.R."/>
            <person name="Holden M.T.G."/>
            <person name="Carder C."/>
            <person name="Lennard N."/>
            <person name="Lockey S.J."/>
            <person name="Marsh P."/>
            <person name="Skipp P."/>
            <person name="O'Connor C.D."/>
            <person name="Goodhead I."/>
            <person name="Norbertzcak H."/>
            <person name="Harris B."/>
            <person name="Ormond D."/>
            <person name="Rance R."/>
            <person name="Quail M.A."/>
            <person name="Parkhill J."/>
            <person name="Stephens R.S."/>
            <person name="Clarke I.N."/>
        </authorList>
    </citation>
    <scope>NUCLEOTIDE SEQUENCE [LARGE SCALE GENOMIC DNA]</scope>
    <source>
        <strain>ATCC VR-902B / DSM 19102 / 434/Bu</strain>
    </source>
</reference>
<feature type="chain" id="PRO_1000091305" description="Leucine--tRNA ligase">
    <location>
        <begin position="1"/>
        <end position="819"/>
    </location>
</feature>
<feature type="short sequence motif" description="'HIGH' region">
    <location>
        <begin position="40"/>
        <end position="51"/>
    </location>
</feature>
<feature type="short sequence motif" description="'KMSKS' region">
    <location>
        <begin position="600"/>
        <end position="604"/>
    </location>
</feature>
<feature type="binding site" evidence="1">
    <location>
        <position position="603"/>
    </location>
    <ligand>
        <name>ATP</name>
        <dbReference type="ChEBI" id="CHEBI:30616"/>
    </ligand>
</feature>
<keyword id="KW-0030">Aminoacyl-tRNA synthetase</keyword>
<keyword id="KW-0067">ATP-binding</keyword>
<keyword id="KW-0963">Cytoplasm</keyword>
<keyword id="KW-0436">Ligase</keyword>
<keyword id="KW-0547">Nucleotide-binding</keyword>
<keyword id="KW-0648">Protein biosynthesis</keyword>
<proteinExistence type="inferred from homology"/>
<comment type="catalytic activity">
    <reaction evidence="1">
        <text>tRNA(Leu) + L-leucine + ATP = L-leucyl-tRNA(Leu) + AMP + diphosphate</text>
        <dbReference type="Rhea" id="RHEA:11688"/>
        <dbReference type="Rhea" id="RHEA-COMP:9613"/>
        <dbReference type="Rhea" id="RHEA-COMP:9622"/>
        <dbReference type="ChEBI" id="CHEBI:30616"/>
        <dbReference type="ChEBI" id="CHEBI:33019"/>
        <dbReference type="ChEBI" id="CHEBI:57427"/>
        <dbReference type="ChEBI" id="CHEBI:78442"/>
        <dbReference type="ChEBI" id="CHEBI:78494"/>
        <dbReference type="ChEBI" id="CHEBI:456215"/>
        <dbReference type="EC" id="6.1.1.4"/>
    </reaction>
</comment>
<comment type="subcellular location">
    <subcellularLocation>
        <location evidence="1">Cytoplasm</location>
    </subcellularLocation>
</comment>
<comment type="similarity">
    <text evidence="1">Belongs to the class-I aminoacyl-tRNA synthetase family.</text>
</comment>